<proteinExistence type="inferred from homology"/>
<gene>
    <name evidence="1" type="primary">citX</name>
    <name type="ordered locus">M6_Spy0897</name>
</gene>
<reference key="1">
    <citation type="journal article" date="2004" name="J. Infect. Dis.">
        <title>Progress toward characterization of the group A Streptococcus metagenome: complete genome sequence of a macrolide-resistant serotype M6 strain.</title>
        <authorList>
            <person name="Banks D.J."/>
            <person name="Porcella S.F."/>
            <person name="Barbian K.D."/>
            <person name="Beres S.B."/>
            <person name="Philips L.E."/>
            <person name="Voyich J.M."/>
            <person name="DeLeo F.R."/>
            <person name="Martin J.M."/>
            <person name="Somerville G.A."/>
            <person name="Musser J.M."/>
        </authorList>
    </citation>
    <scope>NUCLEOTIDE SEQUENCE [LARGE SCALE GENOMIC DNA]</scope>
    <source>
        <strain>ATCC BAA-946 / MGAS10394</strain>
    </source>
</reference>
<dbReference type="EC" id="2.7.7.61" evidence="1"/>
<dbReference type="EMBL" id="CP000003">
    <property type="protein sequence ID" value="AAT87032.1"/>
    <property type="status" value="ALT_INIT"/>
    <property type="molecule type" value="Genomic_DNA"/>
</dbReference>
<dbReference type="RefSeq" id="WP_011888860.1">
    <property type="nucleotide sequence ID" value="NC_006086.1"/>
</dbReference>
<dbReference type="SMR" id="Q5XC31"/>
<dbReference type="KEGG" id="spa:M6_Spy0897"/>
<dbReference type="HOGENOM" id="CLU_104529_1_0_9"/>
<dbReference type="Proteomes" id="UP000001167">
    <property type="component" value="Chromosome"/>
</dbReference>
<dbReference type="GO" id="GO:0050519">
    <property type="term" value="F:holo-citrate lyase synthase activity"/>
    <property type="evidence" value="ECO:0007669"/>
    <property type="project" value="UniProtKB-UniRule"/>
</dbReference>
<dbReference type="GO" id="GO:0051191">
    <property type="term" value="P:prosthetic group biosynthetic process"/>
    <property type="evidence" value="ECO:0007669"/>
    <property type="project" value="InterPro"/>
</dbReference>
<dbReference type="HAMAP" id="MF_00398">
    <property type="entry name" value="CitX"/>
    <property type="match status" value="1"/>
</dbReference>
<dbReference type="InterPro" id="IPR005551">
    <property type="entry name" value="CitX"/>
</dbReference>
<dbReference type="NCBIfam" id="TIGR03124">
    <property type="entry name" value="citrate_citX"/>
    <property type="match status" value="1"/>
</dbReference>
<dbReference type="NCBIfam" id="NF002383">
    <property type="entry name" value="PRK01392.1"/>
    <property type="match status" value="1"/>
</dbReference>
<dbReference type="Pfam" id="PF03802">
    <property type="entry name" value="CitX"/>
    <property type="match status" value="1"/>
</dbReference>
<feature type="chain" id="PRO_0000214690" description="Probable apo-citrate lyase phosphoribosyl-dephospho-CoA transferase">
    <location>
        <begin position="1"/>
        <end position="192"/>
    </location>
</feature>
<sequence>MSKEAYFSGESIQLSDMLRAREERALRQLHLLKEYPEGSLLSVTMNIPGPIKTSPKLLEAFDIVIKAIQTALADDKICYQLRLLPTTGYEYYLITSLPSRDLKLKMIALETELPIGRLMDLDVLVLQNDLPHSISRTVLGGSPRQCFICSKEAKVCGRLRKHSVEEMQTAISKLLHSFFNKDNQSSSSDKTG</sequence>
<name>CITX_STRP6</name>
<accession>Q5XC31</accession>
<organism>
    <name type="scientific">Streptococcus pyogenes serotype M6 (strain ATCC BAA-946 / MGAS10394)</name>
    <dbReference type="NCBI Taxonomy" id="286636"/>
    <lineage>
        <taxon>Bacteria</taxon>
        <taxon>Bacillati</taxon>
        <taxon>Bacillota</taxon>
        <taxon>Bacilli</taxon>
        <taxon>Lactobacillales</taxon>
        <taxon>Streptococcaceae</taxon>
        <taxon>Streptococcus</taxon>
    </lineage>
</organism>
<comment type="function">
    <text evidence="1">Transfers 2-(5''-triphosphoribosyl)-3'-dephosphocoenzyme-A on a serine residue to the apo-acyl carrier protein (gamma chain) of the citrate lyase to yield holo-acyl carrier protein.</text>
</comment>
<comment type="catalytic activity">
    <reaction evidence="1">
        <text>apo-[citrate lyase ACP] + 2'-(5''-triphospho-alpha-D-ribosyl)-3'-dephospho-CoA = holo-[citrate lyase ACP] + diphosphate</text>
        <dbReference type="Rhea" id="RHEA:16333"/>
        <dbReference type="Rhea" id="RHEA-COMP:10157"/>
        <dbReference type="Rhea" id="RHEA-COMP:10158"/>
        <dbReference type="ChEBI" id="CHEBI:29999"/>
        <dbReference type="ChEBI" id="CHEBI:33019"/>
        <dbReference type="ChEBI" id="CHEBI:61378"/>
        <dbReference type="ChEBI" id="CHEBI:82683"/>
        <dbReference type="EC" id="2.7.7.61"/>
    </reaction>
</comment>
<comment type="similarity">
    <text evidence="1">Belongs to the CitX family.</text>
</comment>
<comment type="sequence caution" evidence="2">
    <conflict type="erroneous initiation">
        <sequence resource="EMBL-CDS" id="AAT87032"/>
    </conflict>
</comment>
<protein>
    <recommendedName>
        <fullName evidence="1">Probable apo-citrate lyase phosphoribosyl-dephospho-CoA transferase</fullName>
        <ecNumber evidence="1">2.7.7.61</ecNumber>
    </recommendedName>
    <alternativeName>
        <fullName evidence="1">Apo-ACP nucleodityltransferase</fullName>
    </alternativeName>
    <alternativeName>
        <fullName evidence="1">Holo-ACP synthase</fullName>
    </alternativeName>
    <alternativeName>
        <fullName evidence="1">Holo-citrate lyase synthase</fullName>
    </alternativeName>
</protein>
<evidence type="ECO:0000255" key="1">
    <source>
        <dbReference type="HAMAP-Rule" id="MF_00398"/>
    </source>
</evidence>
<evidence type="ECO:0000305" key="2"/>
<keyword id="KW-0548">Nucleotidyltransferase</keyword>
<keyword id="KW-0808">Transferase</keyword>